<evidence type="ECO:0000255" key="1">
    <source>
        <dbReference type="HAMAP-Rule" id="MF_00014"/>
    </source>
</evidence>
<gene>
    <name evidence="1" type="primary">rimM</name>
    <name type="ordered locus">VC0395_A0096</name>
    <name type="ordered locus">VC395_0579</name>
</gene>
<protein>
    <recommendedName>
        <fullName evidence="1">Ribosome maturation factor RimM</fullName>
    </recommendedName>
</protein>
<sequence length="184" mass="21292">MSMKGKETMSKQNEKLVVGKLGSSYGIRGWLKVFSYTDNPESIFDYSPWYIDQKGEWVEYKVEGWKRHNKGWVVKLQGLDVREDAHLLTNFEIAIDPASLPELSEDEFYWRELFGMQVVTTNGYDLGVVTDMMETGSNDVLVVKANLKDAFGQKERLIPFLEEQVIKVVDRQAQRIEVDWDPAF</sequence>
<accession>A5F9A8</accession>
<accession>C3LX88</accession>
<organism>
    <name type="scientific">Vibrio cholerae serotype O1 (strain ATCC 39541 / Classical Ogawa 395 / O395)</name>
    <dbReference type="NCBI Taxonomy" id="345073"/>
    <lineage>
        <taxon>Bacteria</taxon>
        <taxon>Pseudomonadati</taxon>
        <taxon>Pseudomonadota</taxon>
        <taxon>Gammaproteobacteria</taxon>
        <taxon>Vibrionales</taxon>
        <taxon>Vibrionaceae</taxon>
        <taxon>Vibrio</taxon>
    </lineage>
</organism>
<feature type="chain" id="PRO_0000321769" description="Ribosome maturation factor RimM">
    <location>
        <begin position="1"/>
        <end position="184"/>
    </location>
</feature>
<feature type="domain" description="PRC barrel" evidence="1">
    <location>
        <begin position="105"/>
        <end position="184"/>
    </location>
</feature>
<comment type="function">
    <text evidence="1">An accessory protein needed during the final step in the assembly of 30S ribosomal subunit, possibly for assembly of the head region. Essential for efficient processing of 16S rRNA. May be needed both before and after RbfA during the maturation of 16S rRNA. It has affinity for free ribosomal 30S subunits but not for 70S ribosomes.</text>
</comment>
<comment type="subunit">
    <text evidence="1">Binds ribosomal protein uS19.</text>
</comment>
<comment type="subcellular location">
    <subcellularLocation>
        <location evidence="1">Cytoplasm</location>
    </subcellularLocation>
</comment>
<comment type="domain">
    <text evidence="1">The PRC barrel domain binds ribosomal protein uS19.</text>
</comment>
<comment type="similarity">
    <text evidence="1">Belongs to the RimM family.</text>
</comment>
<proteinExistence type="inferred from homology"/>
<keyword id="KW-0143">Chaperone</keyword>
<keyword id="KW-0963">Cytoplasm</keyword>
<keyword id="KW-0690">Ribosome biogenesis</keyword>
<keyword id="KW-0698">rRNA processing</keyword>
<name>RIMM_VIBC3</name>
<reference key="1">
    <citation type="submission" date="2007-03" db="EMBL/GenBank/DDBJ databases">
        <authorList>
            <person name="Heidelberg J."/>
        </authorList>
    </citation>
    <scope>NUCLEOTIDE SEQUENCE [LARGE SCALE GENOMIC DNA]</scope>
    <source>
        <strain>ATCC 39541 / Classical Ogawa 395 / O395</strain>
    </source>
</reference>
<reference key="2">
    <citation type="journal article" date="2008" name="PLoS ONE">
        <title>A recalibrated molecular clock and independent origins for the cholera pandemic clones.</title>
        <authorList>
            <person name="Feng L."/>
            <person name="Reeves P.R."/>
            <person name="Lan R."/>
            <person name="Ren Y."/>
            <person name="Gao C."/>
            <person name="Zhou Z."/>
            <person name="Ren Y."/>
            <person name="Cheng J."/>
            <person name="Wang W."/>
            <person name="Wang J."/>
            <person name="Qian W."/>
            <person name="Li D."/>
            <person name="Wang L."/>
        </authorList>
    </citation>
    <scope>NUCLEOTIDE SEQUENCE [LARGE SCALE GENOMIC DNA]</scope>
    <source>
        <strain>ATCC 39541 / Classical Ogawa 395 / O395</strain>
    </source>
</reference>
<dbReference type="EMBL" id="CP000627">
    <property type="protein sequence ID" value="ABQ20480.1"/>
    <property type="molecule type" value="Genomic_DNA"/>
</dbReference>
<dbReference type="EMBL" id="CP001235">
    <property type="protein sequence ID" value="ACP08598.1"/>
    <property type="molecule type" value="Genomic_DNA"/>
</dbReference>
<dbReference type="RefSeq" id="WP_000061906.1">
    <property type="nucleotide sequence ID" value="NZ_JAACZH010000006.1"/>
</dbReference>
<dbReference type="SMR" id="A5F9A8"/>
<dbReference type="GeneID" id="88784060"/>
<dbReference type="KEGG" id="vco:VC0395_A0096"/>
<dbReference type="KEGG" id="vcr:VC395_0579"/>
<dbReference type="PATRIC" id="fig|345073.21.peg.567"/>
<dbReference type="eggNOG" id="COG0806">
    <property type="taxonomic scope" value="Bacteria"/>
</dbReference>
<dbReference type="HOGENOM" id="CLU_077636_1_0_6"/>
<dbReference type="OrthoDB" id="9783509at2"/>
<dbReference type="Proteomes" id="UP000000249">
    <property type="component" value="Chromosome 2"/>
</dbReference>
<dbReference type="GO" id="GO:0005737">
    <property type="term" value="C:cytoplasm"/>
    <property type="evidence" value="ECO:0007669"/>
    <property type="project" value="UniProtKB-SubCell"/>
</dbReference>
<dbReference type="GO" id="GO:0005840">
    <property type="term" value="C:ribosome"/>
    <property type="evidence" value="ECO:0007669"/>
    <property type="project" value="InterPro"/>
</dbReference>
<dbReference type="GO" id="GO:0043022">
    <property type="term" value="F:ribosome binding"/>
    <property type="evidence" value="ECO:0007669"/>
    <property type="project" value="InterPro"/>
</dbReference>
<dbReference type="GO" id="GO:0042274">
    <property type="term" value="P:ribosomal small subunit biogenesis"/>
    <property type="evidence" value="ECO:0007669"/>
    <property type="project" value="UniProtKB-UniRule"/>
</dbReference>
<dbReference type="GO" id="GO:0006364">
    <property type="term" value="P:rRNA processing"/>
    <property type="evidence" value="ECO:0007669"/>
    <property type="project" value="UniProtKB-UniRule"/>
</dbReference>
<dbReference type="FunFam" id="2.30.30.240:FF:000001">
    <property type="entry name" value="Ribosome maturation factor RimM"/>
    <property type="match status" value="1"/>
</dbReference>
<dbReference type="Gene3D" id="2.30.30.240">
    <property type="entry name" value="PRC-barrel domain"/>
    <property type="match status" value="1"/>
</dbReference>
<dbReference type="Gene3D" id="2.40.30.60">
    <property type="entry name" value="RimM"/>
    <property type="match status" value="1"/>
</dbReference>
<dbReference type="HAMAP" id="MF_00014">
    <property type="entry name" value="Ribosome_mat_RimM"/>
    <property type="match status" value="1"/>
</dbReference>
<dbReference type="InterPro" id="IPR027275">
    <property type="entry name" value="PRC-brl_dom"/>
</dbReference>
<dbReference type="InterPro" id="IPR011033">
    <property type="entry name" value="PRC_barrel-like_sf"/>
</dbReference>
<dbReference type="InterPro" id="IPR011961">
    <property type="entry name" value="RimM"/>
</dbReference>
<dbReference type="InterPro" id="IPR002676">
    <property type="entry name" value="RimM_N"/>
</dbReference>
<dbReference type="InterPro" id="IPR036976">
    <property type="entry name" value="RimM_N_sf"/>
</dbReference>
<dbReference type="InterPro" id="IPR009000">
    <property type="entry name" value="Transl_B-barrel_sf"/>
</dbReference>
<dbReference type="NCBIfam" id="TIGR02273">
    <property type="entry name" value="16S_RimM"/>
    <property type="match status" value="1"/>
</dbReference>
<dbReference type="PANTHER" id="PTHR33692">
    <property type="entry name" value="RIBOSOME MATURATION FACTOR RIMM"/>
    <property type="match status" value="1"/>
</dbReference>
<dbReference type="PANTHER" id="PTHR33692:SF1">
    <property type="entry name" value="RIBOSOME MATURATION FACTOR RIMM"/>
    <property type="match status" value="1"/>
</dbReference>
<dbReference type="Pfam" id="PF05239">
    <property type="entry name" value="PRC"/>
    <property type="match status" value="1"/>
</dbReference>
<dbReference type="Pfam" id="PF01782">
    <property type="entry name" value="RimM"/>
    <property type="match status" value="1"/>
</dbReference>
<dbReference type="SUPFAM" id="SSF50346">
    <property type="entry name" value="PRC-barrel domain"/>
    <property type="match status" value="1"/>
</dbReference>
<dbReference type="SUPFAM" id="SSF50447">
    <property type="entry name" value="Translation proteins"/>
    <property type="match status" value="1"/>
</dbReference>